<protein>
    <recommendedName>
        <fullName>Nucleus export protein brr6</fullName>
    </recommendedName>
</protein>
<reference evidence="9" key="1">
    <citation type="journal article" date="2002" name="Nature">
        <title>The genome sequence of Schizosaccharomyces pombe.</title>
        <authorList>
            <person name="Wood V."/>
            <person name="Gwilliam R."/>
            <person name="Rajandream M.A."/>
            <person name="Lyne M.H."/>
            <person name="Lyne R."/>
            <person name="Stewart A."/>
            <person name="Sgouros J.G."/>
            <person name="Peat N."/>
            <person name="Hayles J."/>
            <person name="Baker S.G."/>
            <person name="Basham D."/>
            <person name="Bowman S."/>
            <person name="Brooks K."/>
            <person name="Brown D."/>
            <person name="Brown S."/>
            <person name="Chillingworth T."/>
            <person name="Churcher C.M."/>
            <person name="Collins M."/>
            <person name="Connor R."/>
            <person name="Cronin A."/>
            <person name="Davis P."/>
            <person name="Feltwell T."/>
            <person name="Fraser A."/>
            <person name="Gentles S."/>
            <person name="Goble A."/>
            <person name="Hamlin N."/>
            <person name="Harris D.E."/>
            <person name="Hidalgo J."/>
            <person name="Hodgson G."/>
            <person name="Holroyd S."/>
            <person name="Hornsby T."/>
            <person name="Howarth S."/>
            <person name="Huckle E.J."/>
            <person name="Hunt S."/>
            <person name="Jagels K."/>
            <person name="James K.D."/>
            <person name="Jones L."/>
            <person name="Jones M."/>
            <person name="Leather S."/>
            <person name="McDonald S."/>
            <person name="McLean J."/>
            <person name="Mooney P."/>
            <person name="Moule S."/>
            <person name="Mungall K.L."/>
            <person name="Murphy L.D."/>
            <person name="Niblett D."/>
            <person name="Odell C."/>
            <person name="Oliver K."/>
            <person name="O'Neil S."/>
            <person name="Pearson D."/>
            <person name="Quail M.A."/>
            <person name="Rabbinowitsch E."/>
            <person name="Rutherford K.M."/>
            <person name="Rutter S."/>
            <person name="Saunders D."/>
            <person name="Seeger K."/>
            <person name="Sharp S."/>
            <person name="Skelton J."/>
            <person name="Simmonds M.N."/>
            <person name="Squares R."/>
            <person name="Squares S."/>
            <person name="Stevens K."/>
            <person name="Taylor K."/>
            <person name="Taylor R.G."/>
            <person name="Tivey A."/>
            <person name="Walsh S.V."/>
            <person name="Warren T."/>
            <person name="Whitehead S."/>
            <person name="Woodward J.R."/>
            <person name="Volckaert G."/>
            <person name="Aert R."/>
            <person name="Robben J."/>
            <person name="Grymonprez B."/>
            <person name="Weltjens I."/>
            <person name="Vanstreels E."/>
            <person name="Rieger M."/>
            <person name="Schaefer M."/>
            <person name="Mueller-Auer S."/>
            <person name="Gabel C."/>
            <person name="Fuchs M."/>
            <person name="Duesterhoeft A."/>
            <person name="Fritzc C."/>
            <person name="Holzer E."/>
            <person name="Moestl D."/>
            <person name="Hilbert H."/>
            <person name="Borzym K."/>
            <person name="Langer I."/>
            <person name="Beck A."/>
            <person name="Lehrach H."/>
            <person name="Reinhardt R."/>
            <person name="Pohl T.M."/>
            <person name="Eger P."/>
            <person name="Zimmermann W."/>
            <person name="Wedler H."/>
            <person name="Wambutt R."/>
            <person name="Purnelle B."/>
            <person name="Goffeau A."/>
            <person name="Cadieu E."/>
            <person name="Dreano S."/>
            <person name="Gloux S."/>
            <person name="Lelaure V."/>
            <person name="Mottier S."/>
            <person name="Galibert F."/>
            <person name="Aves S.J."/>
            <person name="Xiang Z."/>
            <person name="Hunt C."/>
            <person name="Moore K."/>
            <person name="Hurst S.M."/>
            <person name="Lucas M."/>
            <person name="Rochet M."/>
            <person name="Gaillardin C."/>
            <person name="Tallada V.A."/>
            <person name="Garzon A."/>
            <person name="Thode G."/>
            <person name="Daga R.R."/>
            <person name="Cruzado L."/>
            <person name="Jimenez J."/>
            <person name="Sanchez M."/>
            <person name="del Rey F."/>
            <person name="Benito J."/>
            <person name="Dominguez A."/>
            <person name="Revuelta J.L."/>
            <person name="Moreno S."/>
            <person name="Armstrong J."/>
            <person name="Forsburg S.L."/>
            <person name="Cerutti L."/>
            <person name="Lowe T."/>
            <person name="McCombie W.R."/>
            <person name="Paulsen I."/>
            <person name="Potashkin J."/>
            <person name="Shpakovski G.V."/>
            <person name="Ussery D."/>
            <person name="Barrell B.G."/>
            <person name="Nurse P."/>
        </authorList>
    </citation>
    <scope>NUCLEOTIDE SEQUENCE [LARGE SCALE GENOMIC DNA]</scope>
    <source>
        <strain>972 / ATCC 24843</strain>
    </source>
</reference>
<reference evidence="8" key="2">
    <citation type="journal article" date="2006" name="Nat. Biotechnol.">
        <title>ORFeome cloning and global analysis of protein localization in the fission yeast Schizosaccharomyces pombe.</title>
        <authorList>
            <person name="Matsuyama A."/>
            <person name="Arai R."/>
            <person name="Yashiroda Y."/>
            <person name="Shirai A."/>
            <person name="Kamata A."/>
            <person name="Sekido S."/>
            <person name="Kobayashi Y."/>
            <person name="Hashimoto A."/>
            <person name="Hamamoto M."/>
            <person name="Hiraoka Y."/>
            <person name="Horinouchi S."/>
            <person name="Yoshida M."/>
        </authorList>
    </citation>
    <scope>SUBCELLULAR LOCATION [LARGE SCALE ANALYSIS]</scope>
</reference>
<reference key="3">
    <citation type="journal article" date="2007" name="Eukaryot. Cell">
        <title>Functional characterization of Pneumocystis carinii brl1 by transspecies complementation analysis.</title>
        <authorList>
            <person name="Lo Presti L."/>
            <person name="Cockell M."/>
            <person name="Cerutti L."/>
            <person name="Simanis V."/>
            <person name="Hauser P.M."/>
        </authorList>
    </citation>
    <scope>FUNCTION</scope>
</reference>
<reference key="4">
    <citation type="journal article" date="2008" name="J. Proteome Res.">
        <title>Phosphoproteome analysis of fission yeast.</title>
        <authorList>
            <person name="Wilson-Grady J.T."/>
            <person name="Villen J."/>
            <person name="Gygi S.P."/>
        </authorList>
    </citation>
    <scope>PHOSPHORYLATION [LARGE SCALE ANALYSIS] AT SER-90</scope>
    <scope>IDENTIFICATION BY MASS SPECTROMETRY</scope>
</reference>
<accession>Q9UT30</accession>
<keyword id="KW-0256">Endoplasmic reticulum</keyword>
<keyword id="KW-0472">Membrane</keyword>
<keyword id="KW-0509">mRNA transport</keyword>
<keyword id="KW-0539">Nucleus</keyword>
<keyword id="KW-0597">Phosphoprotein</keyword>
<keyword id="KW-0653">Protein transport</keyword>
<keyword id="KW-1185">Reference proteome</keyword>
<keyword id="KW-0812">Transmembrane</keyword>
<keyword id="KW-1133">Transmembrane helix</keyword>
<keyword id="KW-0813">Transport</keyword>
<comment type="function">
    <text evidence="2 6">Involved in mRNA and protein export from nucleus.</text>
</comment>
<comment type="subcellular location">
    <subcellularLocation>
        <location evidence="5">Endoplasmic reticulum membrane</location>
        <topology evidence="5">Multi-pass membrane protein</topology>
    </subcellularLocation>
    <subcellularLocation>
        <location evidence="1">Nucleus membrane</location>
        <topology evidence="1">Multi-pass membrane protein</topology>
    </subcellularLocation>
</comment>
<comment type="similarity">
    <text evidence="8">Belongs to the BRL1/BRR6 family.</text>
</comment>
<dbReference type="EMBL" id="CU329670">
    <property type="protein sequence ID" value="CAB52167.1"/>
    <property type="molecule type" value="Genomic_DNA"/>
</dbReference>
<dbReference type="PIR" id="T39181">
    <property type="entry name" value="T39181"/>
</dbReference>
<dbReference type="RefSeq" id="NP_593955.1">
    <property type="nucleotide sequence ID" value="NM_001019382.2"/>
</dbReference>
<dbReference type="BioGRID" id="280011">
    <property type="interactions" value="8"/>
</dbReference>
<dbReference type="FunCoup" id="Q9UT30">
    <property type="interactions" value="37"/>
</dbReference>
<dbReference type="STRING" id="284812.Q9UT30"/>
<dbReference type="iPTMnet" id="Q9UT30"/>
<dbReference type="PaxDb" id="4896-SPAC8F11.06.1"/>
<dbReference type="EnsemblFungi" id="SPAC8F11.06.1">
    <property type="protein sequence ID" value="SPAC8F11.06.1:pep"/>
    <property type="gene ID" value="SPAC8F11.06"/>
</dbReference>
<dbReference type="GeneID" id="2543596"/>
<dbReference type="KEGG" id="spo:2543596"/>
<dbReference type="PomBase" id="SPAC8F11.06">
    <property type="gene designation" value="brr6"/>
</dbReference>
<dbReference type="VEuPathDB" id="FungiDB:SPAC8F11.06"/>
<dbReference type="eggNOG" id="KOG4503">
    <property type="taxonomic scope" value="Eukaryota"/>
</dbReference>
<dbReference type="HOGENOM" id="CLU_937376_0_0_1"/>
<dbReference type="InParanoid" id="Q9UT30"/>
<dbReference type="OMA" id="HISYKTM"/>
<dbReference type="PhylomeDB" id="Q9UT30"/>
<dbReference type="PRO" id="PR:Q9UT30"/>
<dbReference type="Proteomes" id="UP000002485">
    <property type="component" value="Chromosome I"/>
</dbReference>
<dbReference type="GO" id="GO:0044732">
    <property type="term" value="C:mitotic spindle pole body"/>
    <property type="evidence" value="ECO:0000314"/>
    <property type="project" value="PomBase"/>
</dbReference>
<dbReference type="GO" id="GO:0005635">
    <property type="term" value="C:nuclear envelope"/>
    <property type="evidence" value="ECO:0000314"/>
    <property type="project" value="PomBase"/>
</dbReference>
<dbReference type="GO" id="GO:0031965">
    <property type="term" value="C:nuclear membrane"/>
    <property type="evidence" value="ECO:0000266"/>
    <property type="project" value="PomBase"/>
</dbReference>
<dbReference type="GO" id="GO:1990578">
    <property type="term" value="C:perinuclear endoplasmic reticulum membrane"/>
    <property type="evidence" value="ECO:0007005"/>
    <property type="project" value="PomBase"/>
</dbReference>
<dbReference type="GO" id="GO:0055088">
    <property type="term" value="P:lipid homeostasis"/>
    <property type="evidence" value="ECO:0007669"/>
    <property type="project" value="InterPro"/>
</dbReference>
<dbReference type="GO" id="GO:0140480">
    <property type="term" value="P:mitotic spindle pole body insertion into the nuclear envelope"/>
    <property type="evidence" value="ECO:0000315"/>
    <property type="project" value="PomBase"/>
</dbReference>
<dbReference type="GO" id="GO:0051028">
    <property type="term" value="P:mRNA transport"/>
    <property type="evidence" value="ECO:0007669"/>
    <property type="project" value="UniProtKB-KW"/>
</dbReference>
<dbReference type="GO" id="GO:0006998">
    <property type="term" value="P:nuclear envelope organization"/>
    <property type="evidence" value="ECO:0000315"/>
    <property type="project" value="PomBase"/>
</dbReference>
<dbReference type="GO" id="GO:0015031">
    <property type="term" value="P:protein transport"/>
    <property type="evidence" value="ECO:0007669"/>
    <property type="project" value="UniProtKB-KW"/>
</dbReference>
<dbReference type="InterPro" id="IPR040202">
    <property type="entry name" value="Brl1/Brr6"/>
</dbReference>
<dbReference type="InterPro" id="IPR018767">
    <property type="entry name" value="Brl1/Brr6_dom"/>
</dbReference>
<dbReference type="PANTHER" id="PTHR28136:SF1">
    <property type="entry name" value="NUCLEUS EXPORT PROTEIN BRL1"/>
    <property type="match status" value="1"/>
</dbReference>
<dbReference type="PANTHER" id="PTHR28136">
    <property type="entry name" value="NUCLEUS EXPORT PROTEIN BRR6"/>
    <property type="match status" value="1"/>
</dbReference>
<dbReference type="Pfam" id="PF10104">
    <property type="entry name" value="Brr6_like_C_C"/>
    <property type="match status" value="1"/>
</dbReference>
<dbReference type="SMART" id="SM01042">
    <property type="entry name" value="Brr6_like_C_C"/>
    <property type="match status" value="1"/>
</dbReference>
<proteinExistence type="evidence at protein level"/>
<name>BRR6_SCHPO</name>
<gene>
    <name type="primary">brr6</name>
    <name type="synonym">brl1</name>
    <name type="ORF">SPAC8F11.06</name>
</gene>
<evidence type="ECO:0000250" key="1"/>
<evidence type="ECO:0000250" key="2">
    <source>
        <dbReference type="UniProtKB" id="P38770"/>
    </source>
</evidence>
<evidence type="ECO:0000255" key="3"/>
<evidence type="ECO:0000256" key="4">
    <source>
        <dbReference type="SAM" id="MobiDB-lite"/>
    </source>
</evidence>
<evidence type="ECO:0000269" key="5">
    <source>
    </source>
</evidence>
<evidence type="ECO:0000269" key="6">
    <source>
    </source>
</evidence>
<evidence type="ECO:0000269" key="7">
    <source>
    </source>
</evidence>
<evidence type="ECO:0000305" key="8"/>
<evidence type="ECO:0000312" key="9">
    <source>
        <dbReference type="EMBL" id="CAB52167.1"/>
    </source>
</evidence>
<sequence length="297" mass="33574">MEMYVEDVPMPDIGPDSVLNTPIRPKYEILKSKKKTQNENDPEPMDISMSPDEKNLKKSTVRRKLRKSKPNSSSNQVSSRTRALTKRSNSSNAIIKANNQDSVYVSDWTNVHRDIPIVVSGYLQLMFNACVASIFLYFLFKIVFGIQNDVRNRVEYHKILQEEQAADCQREYLSINCDSPGPAIFEVCQKLKQCKMESSNNVGSTKLAALVFAEIIDAFISHISYKTMVFSLILVFGSLLTSNYAFGLYRARHSQNIHDYAANAIPAMIPSSRFLPSNLSDISNRNLIEAASQEEEI</sequence>
<feature type="chain" id="PRO_0000317216" description="Nucleus export protein brr6">
    <location>
        <begin position="1"/>
        <end position="297"/>
    </location>
</feature>
<feature type="transmembrane region" description="Helical" evidence="3">
    <location>
        <begin position="126"/>
        <end position="146"/>
    </location>
</feature>
<feature type="transmembrane region" description="Helical" evidence="3">
    <location>
        <begin position="203"/>
        <end position="223"/>
    </location>
</feature>
<feature type="transmembrane region" description="Helical" evidence="3">
    <location>
        <begin position="228"/>
        <end position="248"/>
    </location>
</feature>
<feature type="region of interest" description="Disordered" evidence="4">
    <location>
        <begin position="1"/>
        <end position="91"/>
    </location>
</feature>
<feature type="compositionally biased region" description="Basic residues" evidence="4">
    <location>
        <begin position="57"/>
        <end position="69"/>
    </location>
</feature>
<feature type="compositionally biased region" description="Low complexity" evidence="4">
    <location>
        <begin position="70"/>
        <end position="79"/>
    </location>
</feature>
<feature type="modified residue" description="Phosphoserine" evidence="7">
    <location>
        <position position="90"/>
    </location>
</feature>
<organism>
    <name type="scientific">Schizosaccharomyces pombe (strain 972 / ATCC 24843)</name>
    <name type="common">Fission yeast</name>
    <dbReference type="NCBI Taxonomy" id="284812"/>
    <lineage>
        <taxon>Eukaryota</taxon>
        <taxon>Fungi</taxon>
        <taxon>Dikarya</taxon>
        <taxon>Ascomycota</taxon>
        <taxon>Taphrinomycotina</taxon>
        <taxon>Schizosaccharomycetes</taxon>
        <taxon>Schizosaccharomycetales</taxon>
        <taxon>Schizosaccharomycetaceae</taxon>
        <taxon>Schizosaccharomyces</taxon>
    </lineage>
</organism>